<reference key="1">
    <citation type="journal article" date="2004" name="Science">
        <title>A predator unmasked: life cycle of Bdellovibrio bacteriovorus from a genomic perspective.</title>
        <authorList>
            <person name="Rendulic S."/>
            <person name="Jagtap P."/>
            <person name="Rosinus A."/>
            <person name="Eppinger M."/>
            <person name="Baar C."/>
            <person name="Lanz C."/>
            <person name="Keller H."/>
            <person name="Lambert C."/>
            <person name="Evans K.J."/>
            <person name="Goesmann A."/>
            <person name="Meyer F."/>
            <person name="Sockett R.E."/>
            <person name="Schuster S.C."/>
        </authorList>
    </citation>
    <scope>NUCLEOTIDE SEQUENCE [LARGE SCALE GENOMIC DNA]</scope>
    <source>
        <strain>ATCC 15356 / DSM 50701 / NCIMB 9529 / HD100</strain>
    </source>
</reference>
<proteinExistence type="inferred from homology"/>
<feature type="chain" id="PRO_0000236485" description="Large ribosomal subunit protein bL9">
    <location>
        <begin position="1"/>
        <end position="147"/>
    </location>
</feature>
<evidence type="ECO:0000255" key="1">
    <source>
        <dbReference type="HAMAP-Rule" id="MF_00503"/>
    </source>
</evidence>
<evidence type="ECO:0000305" key="2"/>
<comment type="function">
    <text evidence="1">Binds to the 23S rRNA.</text>
</comment>
<comment type="similarity">
    <text evidence="1">Belongs to the bacterial ribosomal protein bL9 family.</text>
</comment>
<dbReference type="EMBL" id="BX842646">
    <property type="protein sequence ID" value="CAE77716.1"/>
    <property type="molecule type" value="Genomic_DNA"/>
</dbReference>
<dbReference type="RefSeq" id="WP_011162657.1">
    <property type="nucleotide sequence ID" value="NC_005363.1"/>
</dbReference>
<dbReference type="SMR" id="Q6MRP1"/>
<dbReference type="STRING" id="264462.Bd0034"/>
<dbReference type="GeneID" id="93011187"/>
<dbReference type="KEGG" id="bba:Bd0034"/>
<dbReference type="eggNOG" id="COG0359">
    <property type="taxonomic scope" value="Bacteria"/>
</dbReference>
<dbReference type="HOGENOM" id="CLU_078938_3_0_7"/>
<dbReference type="Proteomes" id="UP000008080">
    <property type="component" value="Chromosome"/>
</dbReference>
<dbReference type="GO" id="GO:1990904">
    <property type="term" value="C:ribonucleoprotein complex"/>
    <property type="evidence" value="ECO:0007669"/>
    <property type="project" value="UniProtKB-KW"/>
</dbReference>
<dbReference type="GO" id="GO:0005840">
    <property type="term" value="C:ribosome"/>
    <property type="evidence" value="ECO:0007669"/>
    <property type="project" value="UniProtKB-KW"/>
</dbReference>
<dbReference type="GO" id="GO:0019843">
    <property type="term" value="F:rRNA binding"/>
    <property type="evidence" value="ECO:0007669"/>
    <property type="project" value="UniProtKB-UniRule"/>
</dbReference>
<dbReference type="GO" id="GO:0003735">
    <property type="term" value="F:structural constituent of ribosome"/>
    <property type="evidence" value="ECO:0007669"/>
    <property type="project" value="InterPro"/>
</dbReference>
<dbReference type="GO" id="GO:0006412">
    <property type="term" value="P:translation"/>
    <property type="evidence" value="ECO:0007669"/>
    <property type="project" value="UniProtKB-UniRule"/>
</dbReference>
<dbReference type="Gene3D" id="3.10.430.100">
    <property type="entry name" value="Ribosomal protein L9, C-terminal domain"/>
    <property type="match status" value="1"/>
</dbReference>
<dbReference type="Gene3D" id="3.40.5.10">
    <property type="entry name" value="Ribosomal protein L9, N-terminal domain"/>
    <property type="match status" value="1"/>
</dbReference>
<dbReference type="HAMAP" id="MF_00503">
    <property type="entry name" value="Ribosomal_bL9"/>
    <property type="match status" value="1"/>
</dbReference>
<dbReference type="InterPro" id="IPR000244">
    <property type="entry name" value="Ribosomal_bL9"/>
</dbReference>
<dbReference type="InterPro" id="IPR009027">
    <property type="entry name" value="Ribosomal_bL9/RNase_H1_N"/>
</dbReference>
<dbReference type="InterPro" id="IPR020594">
    <property type="entry name" value="Ribosomal_bL9_bac/chp"/>
</dbReference>
<dbReference type="InterPro" id="IPR020069">
    <property type="entry name" value="Ribosomal_bL9_C"/>
</dbReference>
<dbReference type="InterPro" id="IPR036791">
    <property type="entry name" value="Ribosomal_bL9_C_sf"/>
</dbReference>
<dbReference type="InterPro" id="IPR020070">
    <property type="entry name" value="Ribosomal_bL9_N"/>
</dbReference>
<dbReference type="InterPro" id="IPR036935">
    <property type="entry name" value="Ribosomal_bL9_N_sf"/>
</dbReference>
<dbReference type="NCBIfam" id="TIGR00158">
    <property type="entry name" value="L9"/>
    <property type="match status" value="1"/>
</dbReference>
<dbReference type="PANTHER" id="PTHR21368">
    <property type="entry name" value="50S RIBOSOMAL PROTEIN L9"/>
    <property type="match status" value="1"/>
</dbReference>
<dbReference type="Pfam" id="PF03948">
    <property type="entry name" value="Ribosomal_L9_C"/>
    <property type="match status" value="1"/>
</dbReference>
<dbReference type="Pfam" id="PF01281">
    <property type="entry name" value="Ribosomal_L9_N"/>
    <property type="match status" value="1"/>
</dbReference>
<dbReference type="SUPFAM" id="SSF55658">
    <property type="entry name" value="L9 N-domain-like"/>
    <property type="match status" value="1"/>
</dbReference>
<dbReference type="SUPFAM" id="SSF55653">
    <property type="entry name" value="Ribosomal protein L9 C-domain"/>
    <property type="match status" value="1"/>
</dbReference>
<dbReference type="PROSITE" id="PS00651">
    <property type="entry name" value="RIBOSOMAL_L9"/>
    <property type="match status" value="1"/>
</dbReference>
<organism>
    <name type="scientific">Bdellovibrio bacteriovorus (strain ATCC 15356 / DSM 50701 / NCIMB 9529 / HD100)</name>
    <dbReference type="NCBI Taxonomy" id="264462"/>
    <lineage>
        <taxon>Bacteria</taxon>
        <taxon>Pseudomonadati</taxon>
        <taxon>Bdellovibrionota</taxon>
        <taxon>Bdellovibrionia</taxon>
        <taxon>Bdellovibrionales</taxon>
        <taxon>Pseudobdellovibrionaceae</taxon>
        <taxon>Bdellovibrio</taxon>
    </lineage>
</organism>
<protein>
    <recommendedName>
        <fullName evidence="1">Large ribosomal subunit protein bL9</fullName>
    </recommendedName>
    <alternativeName>
        <fullName evidence="2">50S ribosomal protein L9</fullName>
    </alternativeName>
</protein>
<gene>
    <name evidence="1" type="primary">rplI</name>
    <name type="ordered locus">Bd0034</name>
</gene>
<accession>Q6MRP1</accession>
<sequence length="147" mass="16568">MKVILQKDVKDVGRVGELVNVSEGFARNFLFPRKLAAEATEKRVKEYEHLQRVAEAKKKKALAERQELLNKINGTTVTFKLAAGDTDKLFGTVTTTDISKELQKMGHSIDRRDIHLEEPIKVLGQHKAVVRYAEGMEAKIQIAVERA</sequence>
<name>RL9_BDEBA</name>
<keyword id="KW-1185">Reference proteome</keyword>
<keyword id="KW-0687">Ribonucleoprotein</keyword>
<keyword id="KW-0689">Ribosomal protein</keyword>
<keyword id="KW-0694">RNA-binding</keyword>
<keyword id="KW-0699">rRNA-binding</keyword>